<feature type="chain" id="PRO_1000060088" description="Phosphoribosylformylglycinamidine synthase subunit PurL">
    <location>
        <begin position="1"/>
        <end position="738"/>
    </location>
</feature>
<feature type="active site" evidence="1">
    <location>
        <position position="53"/>
    </location>
</feature>
<feature type="active site" description="Proton acceptor" evidence="1">
    <location>
        <position position="99"/>
    </location>
</feature>
<feature type="binding site" evidence="1">
    <location>
        <position position="56"/>
    </location>
    <ligand>
        <name>ATP</name>
        <dbReference type="ChEBI" id="CHEBI:30616"/>
    </ligand>
</feature>
<feature type="binding site" evidence="1">
    <location>
        <position position="95"/>
    </location>
    <ligand>
        <name>ATP</name>
        <dbReference type="ChEBI" id="CHEBI:30616"/>
    </ligand>
</feature>
<feature type="binding site" evidence="1">
    <location>
        <position position="97"/>
    </location>
    <ligand>
        <name>Mg(2+)</name>
        <dbReference type="ChEBI" id="CHEBI:18420"/>
        <label>1</label>
    </ligand>
</feature>
<feature type="binding site" evidence="1">
    <location>
        <begin position="98"/>
        <end position="101"/>
    </location>
    <ligand>
        <name>substrate</name>
    </ligand>
</feature>
<feature type="binding site" evidence="1">
    <location>
        <position position="120"/>
    </location>
    <ligand>
        <name>substrate</name>
    </ligand>
</feature>
<feature type="binding site" evidence="1">
    <location>
        <position position="121"/>
    </location>
    <ligand>
        <name>Mg(2+)</name>
        <dbReference type="ChEBI" id="CHEBI:18420"/>
        <label>2</label>
    </ligand>
</feature>
<feature type="binding site" evidence="1">
    <location>
        <position position="244"/>
    </location>
    <ligand>
        <name>substrate</name>
    </ligand>
</feature>
<feature type="binding site" evidence="1">
    <location>
        <position position="274"/>
    </location>
    <ligand>
        <name>Mg(2+)</name>
        <dbReference type="ChEBI" id="CHEBI:18420"/>
        <label>2</label>
    </ligand>
</feature>
<feature type="binding site" evidence="1">
    <location>
        <begin position="318"/>
        <end position="320"/>
    </location>
    <ligand>
        <name>substrate</name>
    </ligand>
</feature>
<feature type="binding site" evidence="1">
    <location>
        <position position="499"/>
    </location>
    <ligand>
        <name>ATP</name>
        <dbReference type="ChEBI" id="CHEBI:30616"/>
    </ligand>
</feature>
<feature type="binding site" evidence="1">
    <location>
        <position position="536"/>
    </location>
    <ligand>
        <name>ATP</name>
        <dbReference type="ChEBI" id="CHEBI:30616"/>
    </ligand>
</feature>
<feature type="binding site" evidence="1">
    <location>
        <position position="537"/>
    </location>
    <ligand>
        <name>Mg(2+)</name>
        <dbReference type="ChEBI" id="CHEBI:18420"/>
        <label>1</label>
    </ligand>
</feature>
<feature type="binding site" evidence="1">
    <location>
        <position position="539"/>
    </location>
    <ligand>
        <name>substrate</name>
    </ligand>
</feature>
<proteinExistence type="inferred from homology"/>
<comment type="function">
    <text evidence="1">Part of the phosphoribosylformylglycinamidine synthase complex involved in the purines biosynthetic pathway. Catalyzes the ATP-dependent conversion of formylglycinamide ribonucleotide (FGAR) and glutamine to yield formylglycinamidine ribonucleotide (FGAM) and glutamate. The FGAM synthase complex is composed of three subunits. PurQ produces an ammonia molecule by converting glutamine to glutamate. PurL transfers the ammonia molecule to FGAR to form FGAM in an ATP-dependent manner. PurS interacts with PurQ and PurL and is thought to assist in the transfer of the ammonia molecule from PurQ to PurL.</text>
</comment>
<comment type="catalytic activity">
    <reaction evidence="1">
        <text>N(2)-formyl-N(1)-(5-phospho-beta-D-ribosyl)glycinamide + L-glutamine + ATP + H2O = 2-formamido-N(1)-(5-O-phospho-beta-D-ribosyl)acetamidine + L-glutamate + ADP + phosphate + H(+)</text>
        <dbReference type="Rhea" id="RHEA:17129"/>
        <dbReference type="ChEBI" id="CHEBI:15377"/>
        <dbReference type="ChEBI" id="CHEBI:15378"/>
        <dbReference type="ChEBI" id="CHEBI:29985"/>
        <dbReference type="ChEBI" id="CHEBI:30616"/>
        <dbReference type="ChEBI" id="CHEBI:43474"/>
        <dbReference type="ChEBI" id="CHEBI:58359"/>
        <dbReference type="ChEBI" id="CHEBI:147286"/>
        <dbReference type="ChEBI" id="CHEBI:147287"/>
        <dbReference type="ChEBI" id="CHEBI:456216"/>
        <dbReference type="EC" id="6.3.5.3"/>
    </reaction>
</comment>
<comment type="pathway">
    <text evidence="1">Purine metabolism; IMP biosynthesis via de novo pathway; 5-amino-1-(5-phospho-D-ribosyl)imidazole from N(2)-formyl-N(1)-(5-phospho-D-ribosyl)glycinamide: step 1/2.</text>
</comment>
<comment type="subunit">
    <text evidence="1">Monomer. Part of the FGAM synthase complex composed of 1 PurL, 1 PurQ and 2 PurS subunits.</text>
</comment>
<comment type="subcellular location">
    <subcellularLocation>
        <location evidence="1">Cytoplasm</location>
    </subcellularLocation>
</comment>
<comment type="similarity">
    <text evidence="1">Belongs to the FGAMS family.</text>
</comment>
<dbReference type="EC" id="6.3.5.3" evidence="1"/>
<dbReference type="EMBL" id="CP000423">
    <property type="protein sequence ID" value="ABJ70523.1"/>
    <property type="molecule type" value="Genomic_DNA"/>
</dbReference>
<dbReference type="RefSeq" id="WP_011674596.1">
    <property type="nucleotide sequence ID" value="NC_008526.1"/>
</dbReference>
<dbReference type="RefSeq" id="YP_806965.1">
    <property type="nucleotide sequence ID" value="NC_008526.1"/>
</dbReference>
<dbReference type="SMR" id="Q037U9"/>
<dbReference type="STRING" id="321967.LSEI_1751"/>
<dbReference type="PaxDb" id="321967-LSEI_1751"/>
<dbReference type="KEGG" id="lca:LSEI_1751"/>
<dbReference type="PATRIC" id="fig|321967.11.peg.1730"/>
<dbReference type="HOGENOM" id="CLU_003100_0_1_9"/>
<dbReference type="UniPathway" id="UPA00074">
    <property type="reaction ID" value="UER00128"/>
</dbReference>
<dbReference type="Proteomes" id="UP000001651">
    <property type="component" value="Chromosome"/>
</dbReference>
<dbReference type="GO" id="GO:0005737">
    <property type="term" value="C:cytoplasm"/>
    <property type="evidence" value="ECO:0007669"/>
    <property type="project" value="UniProtKB-SubCell"/>
</dbReference>
<dbReference type="GO" id="GO:0005524">
    <property type="term" value="F:ATP binding"/>
    <property type="evidence" value="ECO:0007669"/>
    <property type="project" value="UniProtKB-UniRule"/>
</dbReference>
<dbReference type="GO" id="GO:0000287">
    <property type="term" value="F:magnesium ion binding"/>
    <property type="evidence" value="ECO:0007669"/>
    <property type="project" value="UniProtKB-UniRule"/>
</dbReference>
<dbReference type="GO" id="GO:0004642">
    <property type="term" value="F:phosphoribosylformylglycinamidine synthase activity"/>
    <property type="evidence" value="ECO:0007669"/>
    <property type="project" value="UniProtKB-UniRule"/>
</dbReference>
<dbReference type="GO" id="GO:0006189">
    <property type="term" value="P:'de novo' IMP biosynthetic process"/>
    <property type="evidence" value="ECO:0007669"/>
    <property type="project" value="UniProtKB-UniRule"/>
</dbReference>
<dbReference type="CDD" id="cd02203">
    <property type="entry name" value="PurL_repeat1"/>
    <property type="match status" value="1"/>
</dbReference>
<dbReference type="CDD" id="cd02204">
    <property type="entry name" value="PurL_repeat2"/>
    <property type="match status" value="1"/>
</dbReference>
<dbReference type="FunFam" id="3.30.1330.10:FF:000004">
    <property type="entry name" value="Phosphoribosylformylglycinamidine synthase subunit PurL"/>
    <property type="match status" value="1"/>
</dbReference>
<dbReference type="Gene3D" id="3.90.650.10">
    <property type="entry name" value="PurM-like C-terminal domain"/>
    <property type="match status" value="2"/>
</dbReference>
<dbReference type="Gene3D" id="3.30.1330.10">
    <property type="entry name" value="PurM-like, N-terminal domain"/>
    <property type="match status" value="2"/>
</dbReference>
<dbReference type="HAMAP" id="MF_00420">
    <property type="entry name" value="PurL_2"/>
    <property type="match status" value="1"/>
</dbReference>
<dbReference type="InterPro" id="IPR010074">
    <property type="entry name" value="PRibForGlyAmidine_synth_PurL"/>
</dbReference>
<dbReference type="InterPro" id="IPR041609">
    <property type="entry name" value="PurL_linker"/>
</dbReference>
<dbReference type="InterPro" id="IPR010918">
    <property type="entry name" value="PurM-like_C_dom"/>
</dbReference>
<dbReference type="InterPro" id="IPR036676">
    <property type="entry name" value="PurM-like_C_sf"/>
</dbReference>
<dbReference type="InterPro" id="IPR016188">
    <property type="entry name" value="PurM-like_N"/>
</dbReference>
<dbReference type="InterPro" id="IPR036921">
    <property type="entry name" value="PurM-like_N_sf"/>
</dbReference>
<dbReference type="NCBIfam" id="TIGR01736">
    <property type="entry name" value="FGAM_synth_II"/>
    <property type="match status" value="1"/>
</dbReference>
<dbReference type="NCBIfam" id="NF002290">
    <property type="entry name" value="PRK01213.1"/>
    <property type="match status" value="1"/>
</dbReference>
<dbReference type="PANTHER" id="PTHR43555">
    <property type="entry name" value="PHOSPHORIBOSYLFORMYLGLYCINAMIDINE SYNTHASE SUBUNIT PURL"/>
    <property type="match status" value="1"/>
</dbReference>
<dbReference type="PANTHER" id="PTHR43555:SF1">
    <property type="entry name" value="PHOSPHORIBOSYLFORMYLGLYCINAMIDINE SYNTHASE SUBUNIT PURL"/>
    <property type="match status" value="1"/>
</dbReference>
<dbReference type="Pfam" id="PF00586">
    <property type="entry name" value="AIRS"/>
    <property type="match status" value="2"/>
</dbReference>
<dbReference type="Pfam" id="PF02769">
    <property type="entry name" value="AIRS_C"/>
    <property type="match status" value="2"/>
</dbReference>
<dbReference type="Pfam" id="PF18072">
    <property type="entry name" value="FGAR-AT_linker"/>
    <property type="match status" value="1"/>
</dbReference>
<dbReference type="PIRSF" id="PIRSF001587">
    <property type="entry name" value="FGAM_synthase_II"/>
    <property type="match status" value="1"/>
</dbReference>
<dbReference type="SUPFAM" id="SSF56042">
    <property type="entry name" value="PurM C-terminal domain-like"/>
    <property type="match status" value="2"/>
</dbReference>
<dbReference type="SUPFAM" id="SSF55326">
    <property type="entry name" value="PurM N-terminal domain-like"/>
    <property type="match status" value="2"/>
</dbReference>
<keyword id="KW-0067">ATP-binding</keyword>
<keyword id="KW-0963">Cytoplasm</keyword>
<keyword id="KW-0436">Ligase</keyword>
<keyword id="KW-0460">Magnesium</keyword>
<keyword id="KW-0479">Metal-binding</keyword>
<keyword id="KW-0547">Nucleotide-binding</keyword>
<keyword id="KW-0658">Purine biosynthesis</keyword>
<keyword id="KW-1185">Reference proteome</keyword>
<protein>
    <recommendedName>
        <fullName evidence="1">Phosphoribosylformylglycinamidine synthase subunit PurL</fullName>
        <shortName evidence="1">FGAM synthase</shortName>
        <ecNumber evidence="1">6.3.5.3</ecNumber>
    </recommendedName>
    <alternativeName>
        <fullName evidence="1">Formylglycinamide ribonucleotide amidotransferase subunit II</fullName>
        <shortName evidence="1">FGAR amidotransferase II</shortName>
        <shortName evidence="1">FGAR-AT II</shortName>
    </alternativeName>
    <alternativeName>
        <fullName evidence="1">Glutamine amidotransferase PurL</fullName>
    </alternativeName>
    <alternativeName>
        <fullName evidence="1">Phosphoribosylformylglycinamidine synthase subunit II</fullName>
    </alternativeName>
</protein>
<accession>Q037U9</accession>
<name>PURL_LACP3</name>
<organism>
    <name type="scientific">Lacticaseibacillus paracasei (strain ATCC 334 / BCRC 17002 / CCUG 31169 / CIP 107868 / KCTC 3260 / NRRL B-441)</name>
    <name type="common">Lactobacillus paracasei</name>
    <dbReference type="NCBI Taxonomy" id="321967"/>
    <lineage>
        <taxon>Bacteria</taxon>
        <taxon>Bacillati</taxon>
        <taxon>Bacillota</taxon>
        <taxon>Bacilli</taxon>
        <taxon>Lactobacillales</taxon>
        <taxon>Lactobacillaceae</taxon>
        <taxon>Lacticaseibacillus</taxon>
    </lineage>
</organism>
<gene>
    <name evidence="1" type="primary">purL</name>
    <name type="ordered locus">LSEI_1751</name>
</gene>
<sequence>MVHVEMSPEAIATQKPYLDLGLTEAEYDRFAELIGHQPNDTEIGLASGMWSEHCAYKYSKPVLRQFWTKNERVLMGPGEGAGVIDIGEGKAVVFKAESHNHPSAVEPYEGAATGVGGIIRDIFSIGAKPVAMLDSLAFGDIEQPHTQHLVDRIVAGIGGYGNAIGIPTVGGETNFDGSYTRNPLVNAMCVGIMDKDQIQKGKAAGVGNALIYVGAKTGRDGINGASFASGDFSDEEAADRSAVQVGDPFMEKLLMDACLEITGHHQEALVGIQDMGAAGLVSSSVEMAGKANSGMVLDLDLIPQRETEMTPFEIMLSESQERMLLCVRAGFEQEVLAVFADYDLDAAIVGHVIAGHQYQLYHHGKLVCDVPVSSLTDDAPIYHQQGKMPKRLAQPAADFDPIITDPVQIWTDMMAMPTIADKSSLYKRYDAQVQTNTVVLPGSDAAVTRIRGTHRALAMTTDSKGRYLYLDPQVGAAMSVAEAARNLVASGAEPLGITDCLNFGDPTKPEAFYELAEAAKGIIAATKAFNAPVISGNVSLYNETNGEAIYPTPMIGMVGLIEDLSTITTAAFKQADDLIYLVGETHGDFNGSELQKLQTGEVTGKLFDFDLEAEKQHQHFVLKAIREHLITAAHDLSDGGLLVALAEMGFDAQLGAQINVTLPTAWGFSETQGRFLLTVAPENQAAFEALHGPAQLIGRVQAAPEFEVTTVNQHFSASLQQLQTAFEEALPCHMNQKA</sequence>
<reference key="1">
    <citation type="journal article" date="2006" name="Proc. Natl. Acad. Sci. U.S.A.">
        <title>Comparative genomics of the lactic acid bacteria.</title>
        <authorList>
            <person name="Makarova K.S."/>
            <person name="Slesarev A."/>
            <person name="Wolf Y.I."/>
            <person name="Sorokin A."/>
            <person name="Mirkin B."/>
            <person name="Koonin E.V."/>
            <person name="Pavlov A."/>
            <person name="Pavlova N."/>
            <person name="Karamychev V."/>
            <person name="Polouchine N."/>
            <person name="Shakhova V."/>
            <person name="Grigoriev I."/>
            <person name="Lou Y."/>
            <person name="Rohksar D."/>
            <person name="Lucas S."/>
            <person name="Huang K."/>
            <person name="Goodstein D.M."/>
            <person name="Hawkins T."/>
            <person name="Plengvidhya V."/>
            <person name="Welker D."/>
            <person name="Hughes J."/>
            <person name="Goh Y."/>
            <person name="Benson A."/>
            <person name="Baldwin K."/>
            <person name="Lee J.-H."/>
            <person name="Diaz-Muniz I."/>
            <person name="Dosti B."/>
            <person name="Smeianov V."/>
            <person name="Wechter W."/>
            <person name="Barabote R."/>
            <person name="Lorca G."/>
            <person name="Altermann E."/>
            <person name="Barrangou R."/>
            <person name="Ganesan B."/>
            <person name="Xie Y."/>
            <person name="Rawsthorne H."/>
            <person name="Tamir D."/>
            <person name="Parker C."/>
            <person name="Breidt F."/>
            <person name="Broadbent J.R."/>
            <person name="Hutkins R."/>
            <person name="O'Sullivan D."/>
            <person name="Steele J."/>
            <person name="Unlu G."/>
            <person name="Saier M.H. Jr."/>
            <person name="Klaenhammer T."/>
            <person name="Richardson P."/>
            <person name="Kozyavkin S."/>
            <person name="Weimer B.C."/>
            <person name="Mills D.A."/>
        </authorList>
    </citation>
    <scope>NUCLEOTIDE SEQUENCE [LARGE SCALE GENOMIC DNA]</scope>
    <source>
        <strain>ATCC 334 / BCRC 17002 / CCUG 31169 / CIP 107868 / KCTC 3260 / NRRL B-441</strain>
    </source>
</reference>
<evidence type="ECO:0000255" key="1">
    <source>
        <dbReference type="HAMAP-Rule" id="MF_00420"/>
    </source>
</evidence>